<feature type="chain" id="PRO_1000049105" description="Large ribosomal subunit protein bL20">
    <location>
        <begin position="1"/>
        <end position="118"/>
    </location>
</feature>
<name>RL20_YERPP</name>
<proteinExistence type="inferred from homology"/>
<protein>
    <recommendedName>
        <fullName evidence="1">Large ribosomal subunit protein bL20</fullName>
    </recommendedName>
    <alternativeName>
        <fullName evidence="2">50S ribosomal protein L20</fullName>
    </alternativeName>
</protein>
<organism>
    <name type="scientific">Yersinia pestis (strain Pestoides F)</name>
    <dbReference type="NCBI Taxonomy" id="386656"/>
    <lineage>
        <taxon>Bacteria</taxon>
        <taxon>Pseudomonadati</taxon>
        <taxon>Pseudomonadota</taxon>
        <taxon>Gammaproteobacteria</taxon>
        <taxon>Enterobacterales</taxon>
        <taxon>Yersiniaceae</taxon>
        <taxon>Yersinia</taxon>
    </lineage>
</organism>
<keyword id="KW-0687">Ribonucleoprotein</keyword>
<keyword id="KW-0689">Ribosomal protein</keyword>
<keyword id="KW-0694">RNA-binding</keyword>
<keyword id="KW-0699">rRNA-binding</keyword>
<accession>A4TIL4</accession>
<sequence>MARVKRGVIARARHKKILKQAKGYYGARSRVYRVAFQAVIKAGQYAYRDRRQRKRQFRQLWIARINAAARQNGLSYSRFINGLKKASVEIDRKILADIAVFDKVAFSALVEKAKAALA</sequence>
<reference key="1">
    <citation type="submission" date="2007-02" db="EMBL/GenBank/DDBJ databases">
        <title>Complete sequence of chromosome of Yersinia pestis Pestoides F.</title>
        <authorList>
            <consortium name="US DOE Joint Genome Institute"/>
            <person name="Copeland A."/>
            <person name="Lucas S."/>
            <person name="Lapidus A."/>
            <person name="Barry K."/>
            <person name="Detter J.C."/>
            <person name="Glavina del Rio T."/>
            <person name="Hammon N."/>
            <person name="Israni S."/>
            <person name="Dalin E."/>
            <person name="Tice H."/>
            <person name="Pitluck S."/>
            <person name="Di Bartolo G."/>
            <person name="Chain P."/>
            <person name="Malfatti S."/>
            <person name="Shin M."/>
            <person name="Vergez L."/>
            <person name="Schmutz J."/>
            <person name="Larimer F."/>
            <person name="Land M."/>
            <person name="Hauser L."/>
            <person name="Worsham P."/>
            <person name="Chu M."/>
            <person name="Bearden S."/>
            <person name="Garcia E."/>
            <person name="Richardson P."/>
        </authorList>
    </citation>
    <scope>NUCLEOTIDE SEQUENCE [LARGE SCALE GENOMIC DNA]</scope>
    <source>
        <strain>Pestoides F</strain>
    </source>
</reference>
<evidence type="ECO:0000255" key="1">
    <source>
        <dbReference type="HAMAP-Rule" id="MF_00382"/>
    </source>
</evidence>
<evidence type="ECO:0000305" key="2"/>
<comment type="function">
    <text evidence="1">Binds directly to 23S ribosomal RNA and is necessary for the in vitro assembly process of the 50S ribosomal subunit. It is not involved in the protein synthesizing functions of that subunit.</text>
</comment>
<comment type="similarity">
    <text evidence="1">Belongs to the bacterial ribosomal protein bL20 family.</text>
</comment>
<gene>
    <name evidence="1" type="primary">rplT</name>
    <name type="ordered locus">YPDSF_0720</name>
</gene>
<dbReference type="EMBL" id="CP000668">
    <property type="protein sequence ID" value="ABP39126.1"/>
    <property type="molecule type" value="Genomic_DNA"/>
</dbReference>
<dbReference type="RefSeq" id="WP_002211833.1">
    <property type="nucleotide sequence ID" value="NZ_CP009715.1"/>
</dbReference>
<dbReference type="SMR" id="A4TIL4"/>
<dbReference type="GeneID" id="96665819"/>
<dbReference type="KEGG" id="ypp:YPDSF_0720"/>
<dbReference type="PATRIC" id="fig|386656.14.peg.3150"/>
<dbReference type="GO" id="GO:1990904">
    <property type="term" value="C:ribonucleoprotein complex"/>
    <property type="evidence" value="ECO:0007669"/>
    <property type="project" value="UniProtKB-KW"/>
</dbReference>
<dbReference type="GO" id="GO:0005840">
    <property type="term" value="C:ribosome"/>
    <property type="evidence" value="ECO:0007669"/>
    <property type="project" value="UniProtKB-KW"/>
</dbReference>
<dbReference type="GO" id="GO:0019843">
    <property type="term" value="F:rRNA binding"/>
    <property type="evidence" value="ECO:0007669"/>
    <property type="project" value="UniProtKB-UniRule"/>
</dbReference>
<dbReference type="GO" id="GO:0003735">
    <property type="term" value="F:structural constituent of ribosome"/>
    <property type="evidence" value="ECO:0007669"/>
    <property type="project" value="InterPro"/>
</dbReference>
<dbReference type="GO" id="GO:0000027">
    <property type="term" value="P:ribosomal large subunit assembly"/>
    <property type="evidence" value="ECO:0007669"/>
    <property type="project" value="UniProtKB-UniRule"/>
</dbReference>
<dbReference type="GO" id="GO:0006412">
    <property type="term" value="P:translation"/>
    <property type="evidence" value="ECO:0007669"/>
    <property type="project" value="InterPro"/>
</dbReference>
<dbReference type="CDD" id="cd07026">
    <property type="entry name" value="Ribosomal_L20"/>
    <property type="match status" value="1"/>
</dbReference>
<dbReference type="FunFam" id="1.10.1900.20:FF:000001">
    <property type="entry name" value="50S ribosomal protein L20"/>
    <property type="match status" value="1"/>
</dbReference>
<dbReference type="Gene3D" id="6.10.160.10">
    <property type="match status" value="1"/>
</dbReference>
<dbReference type="Gene3D" id="1.10.1900.20">
    <property type="entry name" value="Ribosomal protein L20"/>
    <property type="match status" value="1"/>
</dbReference>
<dbReference type="HAMAP" id="MF_00382">
    <property type="entry name" value="Ribosomal_bL20"/>
    <property type="match status" value="1"/>
</dbReference>
<dbReference type="InterPro" id="IPR005813">
    <property type="entry name" value="Ribosomal_bL20"/>
</dbReference>
<dbReference type="InterPro" id="IPR049946">
    <property type="entry name" value="RIBOSOMAL_L20_CS"/>
</dbReference>
<dbReference type="InterPro" id="IPR035566">
    <property type="entry name" value="Ribosomal_protein_bL20_C"/>
</dbReference>
<dbReference type="NCBIfam" id="TIGR01032">
    <property type="entry name" value="rplT_bact"/>
    <property type="match status" value="1"/>
</dbReference>
<dbReference type="PANTHER" id="PTHR10986">
    <property type="entry name" value="39S RIBOSOMAL PROTEIN L20"/>
    <property type="match status" value="1"/>
</dbReference>
<dbReference type="Pfam" id="PF00453">
    <property type="entry name" value="Ribosomal_L20"/>
    <property type="match status" value="1"/>
</dbReference>
<dbReference type="PRINTS" id="PR00062">
    <property type="entry name" value="RIBOSOMALL20"/>
</dbReference>
<dbReference type="SUPFAM" id="SSF74731">
    <property type="entry name" value="Ribosomal protein L20"/>
    <property type="match status" value="1"/>
</dbReference>
<dbReference type="PROSITE" id="PS00937">
    <property type="entry name" value="RIBOSOMAL_L20"/>
    <property type="match status" value="1"/>
</dbReference>